<organism>
    <name type="scientific">Escherichia coli O139:H28 (strain E24377A / ETEC)</name>
    <dbReference type="NCBI Taxonomy" id="331111"/>
    <lineage>
        <taxon>Bacteria</taxon>
        <taxon>Pseudomonadati</taxon>
        <taxon>Pseudomonadota</taxon>
        <taxon>Gammaproteobacteria</taxon>
        <taxon>Enterobacterales</taxon>
        <taxon>Enterobacteriaceae</taxon>
        <taxon>Escherichia</taxon>
    </lineage>
</organism>
<keyword id="KW-0004">4Fe-4S</keyword>
<keyword id="KW-0342">GTP-binding</keyword>
<keyword id="KW-0408">Iron</keyword>
<keyword id="KW-0411">Iron-sulfur</keyword>
<keyword id="KW-0456">Lyase</keyword>
<keyword id="KW-0479">Metal-binding</keyword>
<keyword id="KW-0501">Molybdenum cofactor biosynthesis</keyword>
<keyword id="KW-0547">Nucleotide-binding</keyword>
<keyword id="KW-1185">Reference proteome</keyword>
<keyword id="KW-0949">S-adenosyl-L-methionine</keyword>
<gene>
    <name evidence="1" type="primary">moaA</name>
    <name type="ordered locus">EcE24377A_0844</name>
</gene>
<accession>A7ZJJ0</accession>
<comment type="function">
    <text evidence="1">Catalyzes the cyclization of GTP to (8S)-3',8-cyclo-7,8-dihydroguanosine 5'-triphosphate.</text>
</comment>
<comment type="catalytic activity">
    <reaction evidence="1">
        <text>GTP + AH2 + S-adenosyl-L-methionine = (8S)-3',8-cyclo-7,8-dihydroguanosine 5'-triphosphate + 5'-deoxyadenosine + L-methionine + A + H(+)</text>
        <dbReference type="Rhea" id="RHEA:49576"/>
        <dbReference type="ChEBI" id="CHEBI:13193"/>
        <dbReference type="ChEBI" id="CHEBI:15378"/>
        <dbReference type="ChEBI" id="CHEBI:17319"/>
        <dbReference type="ChEBI" id="CHEBI:17499"/>
        <dbReference type="ChEBI" id="CHEBI:37565"/>
        <dbReference type="ChEBI" id="CHEBI:57844"/>
        <dbReference type="ChEBI" id="CHEBI:59789"/>
        <dbReference type="ChEBI" id="CHEBI:131766"/>
        <dbReference type="EC" id="4.1.99.22"/>
    </reaction>
</comment>
<comment type="cofactor">
    <cofactor evidence="1">
        <name>[4Fe-4S] cluster</name>
        <dbReference type="ChEBI" id="CHEBI:49883"/>
    </cofactor>
    <text evidence="1">Binds 2 [4Fe-4S] clusters. Binds 1 [4Fe-4S] cluster coordinated with 3 cysteines and an exchangeable S-adenosyl-L-methionine and 1 [4Fe-4S] cluster coordinated with 3 cysteines and the GTP-derived substrate.</text>
</comment>
<comment type="pathway">
    <text evidence="1">Cofactor biosynthesis; molybdopterin biosynthesis.</text>
</comment>
<comment type="subunit">
    <text evidence="1">Monomer and homodimer.</text>
</comment>
<comment type="similarity">
    <text evidence="1">Belongs to the radical SAM superfamily. MoaA family.</text>
</comment>
<protein>
    <recommendedName>
        <fullName evidence="1">GTP 3',8-cyclase</fullName>
        <ecNumber evidence="1">4.1.99.22</ecNumber>
    </recommendedName>
    <alternativeName>
        <fullName evidence="1">Molybdenum cofactor biosynthesis protein A</fullName>
    </alternativeName>
</protein>
<proteinExistence type="inferred from homology"/>
<feature type="chain" id="PRO_1000066808" description="GTP 3',8-cyclase">
    <location>
        <begin position="1"/>
        <end position="329"/>
    </location>
</feature>
<feature type="domain" description="Radical SAM core" evidence="2">
    <location>
        <begin position="8"/>
        <end position="234"/>
    </location>
</feature>
<feature type="binding site" evidence="1">
    <location>
        <position position="17"/>
    </location>
    <ligand>
        <name>GTP</name>
        <dbReference type="ChEBI" id="CHEBI:37565"/>
    </ligand>
</feature>
<feature type="binding site" evidence="1">
    <location>
        <position position="24"/>
    </location>
    <ligand>
        <name>[4Fe-4S] cluster</name>
        <dbReference type="ChEBI" id="CHEBI:49883"/>
        <label>1</label>
        <note>4Fe-4S-S-AdoMet</note>
    </ligand>
</feature>
<feature type="binding site" evidence="1">
    <location>
        <position position="28"/>
    </location>
    <ligand>
        <name>[4Fe-4S] cluster</name>
        <dbReference type="ChEBI" id="CHEBI:49883"/>
        <label>1</label>
        <note>4Fe-4S-S-AdoMet</note>
    </ligand>
</feature>
<feature type="binding site" evidence="1">
    <location>
        <position position="30"/>
    </location>
    <ligand>
        <name>S-adenosyl-L-methionine</name>
        <dbReference type="ChEBI" id="CHEBI:59789"/>
    </ligand>
</feature>
<feature type="binding site" evidence="1">
    <location>
        <position position="31"/>
    </location>
    <ligand>
        <name>[4Fe-4S] cluster</name>
        <dbReference type="ChEBI" id="CHEBI:49883"/>
        <label>1</label>
        <note>4Fe-4S-S-AdoMet</note>
    </ligand>
</feature>
<feature type="binding site" evidence="1">
    <location>
        <position position="68"/>
    </location>
    <ligand>
        <name>GTP</name>
        <dbReference type="ChEBI" id="CHEBI:37565"/>
    </ligand>
</feature>
<feature type="binding site" evidence="1">
    <location>
        <position position="72"/>
    </location>
    <ligand>
        <name>S-adenosyl-L-methionine</name>
        <dbReference type="ChEBI" id="CHEBI:59789"/>
    </ligand>
</feature>
<feature type="binding site" evidence="1">
    <location>
        <position position="99"/>
    </location>
    <ligand>
        <name>GTP</name>
        <dbReference type="ChEBI" id="CHEBI:37565"/>
    </ligand>
</feature>
<feature type="binding site" evidence="1">
    <location>
        <position position="123"/>
    </location>
    <ligand>
        <name>S-adenosyl-L-methionine</name>
        <dbReference type="ChEBI" id="CHEBI:59789"/>
    </ligand>
</feature>
<feature type="binding site" evidence="1">
    <location>
        <position position="160"/>
    </location>
    <ligand>
        <name>GTP</name>
        <dbReference type="ChEBI" id="CHEBI:37565"/>
    </ligand>
</feature>
<feature type="binding site" evidence="1">
    <location>
        <position position="194"/>
    </location>
    <ligand>
        <name>S-adenosyl-L-methionine</name>
        <dbReference type="ChEBI" id="CHEBI:59789"/>
    </ligand>
</feature>
<feature type="binding site" evidence="1">
    <location>
        <position position="257"/>
    </location>
    <ligand>
        <name>[4Fe-4S] cluster</name>
        <dbReference type="ChEBI" id="CHEBI:49883"/>
        <label>2</label>
        <note>4Fe-4S-substrate</note>
    </ligand>
</feature>
<feature type="binding site" evidence="1">
    <location>
        <position position="260"/>
    </location>
    <ligand>
        <name>[4Fe-4S] cluster</name>
        <dbReference type="ChEBI" id="CHEBI:49883"/>
        <label>2</label>
        <note>4Fe-4S-substrate</note>
    </ligand>
</feature>
<feature type="binding site" evidence="1">
    <location>
        <begin position="262"/>
        <end position="264"/>
    </location>
    <ligand>
        <name>GTP</name>
        <dbReference type="ChEBI" id="CHEBI:37565"/>
    </ligand>
</feature>
<feature type="binding site" evidence="1">
    <location>
        <position position="274"/>
    </location>
    <ligand>
        <name>[4Fe-4S] cluster</name>
        <dbReference type="ChEBI" id="CHEBI:49883"/>
        <label>2</label>
        <note>4Fe-4S-substrate</note>
    </ligand>
</feature>
<evidence type="ECO:0000255" key="1">
    <source>
        <dbReference type="HAMAP-Rule" id="MF_01225"/>
    </source>
</evidence>
<evidence type="ECO:0000255" key="2">
    <source>
        <dbReference type="PROSITE-ProRule" id="PRU01266"/>
    </source>
</evidence>
<reference key="1">
    <citation type="journal article" date="2008" name="J. Bacteriol.">
        <title>The pangenome structure of Escherichia coli: comparative genomic analysis of E. coli commensal and pathogenic isolates.</title>
        <authorList>
            <person name="Rasko D.A."/>
            <person name="Rosovitz M.J."/>
            <person name="Myers G.S.A."/>
            <person name="Mongodin E.F."/>
            <person name="Fricke W.F."/>
            <person name="Gajer P."/>
            <person name="Crabtree J."/>
            <person name="Sebaihia M."/>
            <person name="Thomson N.R."/>
            <person name="Chaudhuri R."/>
            <person name="Henderson I.R."/>
            <person name="Sperandio V."/>
            <person name="Ravel J."/>
        </authorList>
    </citation>
    <scope>NUCLEOTIDE SEQUENCE [LARGE SCALE GENOMIC DNA]</scope>
    <source>
        <strain>E24377A / ETEC</strain>
    </source>
</reference>
<dbReference type="EC" id="4.1.99.22" evidence="1"/>
<dbReference type="EMBL" id="CP000800">
    <property type="protein sequence ID" value="ABV17154.1"/>
    <property type="molecule type" value="Genomic_DNA"/>
</dbReference>
<dbReference type="RefSeq" id="WP_001295301.1">
    <property type="nucleotide sequence ID" value="NC_009801.1"/>
</dbReference>
<dbReference type="SMR" id="A7ZJJ0"/>
<dbReference type="GeneID" id="86863291"/>
<dbReference type="KEGG" id="ecw:EcE24377A_0844"/>
<dbReference type="HOGENOM" id="CLU_009273_0_1_6"/>
<dbReference type="UniPathway" id="UPA00344"/>
<dbReference type="Proteomes" id="UP000001122">
    <property type="component" value="Chromosome"/>
</dbReference>
<dbReference type="GO" id="GO:0051539">
    <property type="term" value="F:4 iron, 4 sulfur cluster binding"/>
    <property type="evidence" value="ECO:0007669"/>
    <property type="project" value="UniProtKB-UniRule"/>
</dbReference>
<dbReference type="GO" id="GO:0061799">
    <property type="term" value="F:cyclic pyranopterin monophosphate synthase activity"/>
    <property type="evidence" value="ECO:0007669"/>
    <property type="project" value="TreeGrafter"/>
</dbReference>
<dbReference type="GO" id="GO:0061798">
    <property type="term" value="F:GTP 3',8'-cyclase activity"/>
    <property type="evidence" value="ECO:0007669"/>
    <property type="project" value="UniProtKB-UniRule"/>
</dbReference>
<dbReference type="GO" id="GO:0005525">
    <property type="term" value="F:GTP binding"/>
    <property type="evidence" value="ECO:0007669"/>
    <property type="project" value="UniProtKB-UniRule"/>
</dbReference>
<dbReference type="GO" id="GO:0046872">
    <property type="term" value="F:metal ion binding"/>
    <property type="evidence" value="ECO:0007669"/>
    <property type="project" value="UniProtKB-KW"/>
</dbReference>
<dbReference type="GO" id="GO:1904047">
    <property type="term" value="F:S-adenosyl-L-methionine binding"/>
    <property type="evidence" value="ECO:0007669"/>
    <property type="project" value="UniProtKB-UniRule"/>
</dbReference>
<dbReference type="GO" id="GO:0006777">
    <property type="term" value="P:Mo-molybdopterin cofactor biosynthetic process"/>
    <property type="evidence" value="ECO:0007669"/>
    <property type="project" value="UniProtKB-UniRule"/>
</dbReference>
<dbReference type="CDD" id="cd01335">
    <property type="entry name" value="Radical_SAM"/>
    <property type="match status" value="1"/>
</dbReference>
<dbReference type="CDD" id="cd21117">
    <property type="entry name" value="Twitch_MoaA"/>
    <property type="match status" value="1"/>
</dbReference>
<dbReference type="FunFam" id="3.20.20.70:FF:000057">
    <property type="entry name" value="GTP 3',8-cyclase"/>
    <property type="match status" value="1"/>
</dbReference>
<dbReference type="Gene3D" id="3.20.20.70">
    <property type="entry name" value="Aldolase class I"/>
    <property type="match status" value="1"/>
</dbReference>
<dbReference type="HAMAP" id="MF_01225_B">
    <property type="entry name" value="MoaA_B"/>
    <property type="match status" value="1"/>
</dbReference>
<dbReference type="InterPro" id="IPR013785">
    <property type="entry name" value="Aldolase_TIM"/>
</dbReference>
<dbReference type="InterPro" id="IPR006638">
    <property type="entry name" value="Elp3/MiaA/NifB-like_rSAM"/>
</dbReference>
<dbReference type="InterPro" id="IPR013483">
    <property type="entry name" value="MoaA"/>
</dbReference>
<dbReference type="InterPro" id="IPR000385">
    <property type="entry name" value="MoaA_NifB_PqqE_Fe-S-bd_CS"/>
</dbReference>
<dbReference type="InterPro" id="IPR010505">
    <property type="entry name" value="MoaA_twitch"/>
</dbReference>
<dbReference type="InterPro" id="IPR050105">
    <property type="entry name" value="MoCo_biosynth_MoaA/MoaC"/>
</dbReference>
<dbReference type="InterPro" id="IPR007197">
    <property type="entry name" value="rSAM"/>
</dbReference>
<dbReference type="NCBIfam" id="TIGR02666">
    <property type="entry name" value="moaA"/>
    <property type="match status" value="1"/>
</dbReference>
<dbReference type="PANTHER" id="PTHR22960:SF28">
    <property type="entry name" value="GTP 3',8-CYCLASE"/>
    <property type="match status" value="1"/>
</dbReference>
<dbReference type="PANTHER" id="PTHR22960">
    <property type="entry name" value="MOLYBDOPTERIN COFACTOR SYNTHESIS PROTEIN A"/>
    <property type="match status" value="1"/>
</dbReference>
<dbReference type="Pfam" id="PF13353">
    <property type="entry name" value="Fer4_12"/>
    <property type="match status" value="1"/>
</dbReference>
<dbReference type="Pfam" id="PF06463">
    <property type="entry name" value="Mob_synth_C"/>
    <property type="match status" value="1"/>
</dbReference>
<dbReference type="Pfam" id="PF04055">
    <property type="entry name" value="Radical_SAM"/>
    <property type="match status" value="1"/>
</dbReference>
<dbReference type="SFLD" id="SFLDG01383">
    <property type="entry name" value="cyclic_pyranopterin_phosphate"/>
    <property type="match status" value="1"/>
</dbReference>
<dbReference type="SFLD" id="SFLDG01072">
    <property type="entry name" value="dehydrogenase_like"/>
    <property type="match status" value="1"/>
</dbReference>
<dbReference type="SMART" id="SM00729">
    <property type="entry name" value="Elp3"/>
    <property type="match status" value="1"/>
</dbReference>
<dbReference type="SUPFAM" id="SSF102114">
    <property type="entry name" value="Radical SAM enzymes"/>
    <property type="match status" value="1"/>
</dbReference>
<dbReference type="PROSITE" id="PS01305">
    <property type="entry name" value="MOAA_NIFB_PQQE"/>
    <property type="match status" value="1"/>
</dbReference>
<dbReference type="PROSITE" id="PS51918">
    <property type="entry name" value="RADICAL_SAM"/>
    <property type="match status" value="1"/>
</dbReference>
<sequence length="329" mass="37304">MASQLTDAFARKFYYLRLSITDVCNFRCTYCLPDGYKPSGVTNKGFLTVDEIRRVTRAFASLGTEKVRLTGGEPSLRRDFTDIIAAVRENDAIRQIAVTTNGYRLERDVANWRDAGLTGINVSVDSLDARQFHAITGQDKFNQVMAGIDAAFEAGFEKVKVNTVLMRDVNHHQLDTFLNWIQHRPIQLRFIELMETGEGSELFRKHHISGQVLRDELLRRGWIHQLRQRSDGPAQVFCHPDYAGEIGLIMPYEKDFCATCNRLRVSSIGKLHLCLFGEGGVNLRDLLEDDTQQQALEARISAALREKKQTHFLHQNNTGITQNLSYIGG</sequence>
<name>MOAA_ECO24</name>